<accession>B0BUQ3</accession>
<reference key="1">
    <citation type="journal article" date="2008" name="Infect. Immun.">
        <title>Genomic comparison of virulent Rickettsia rickettsii Sheila Smith and avirulent Rickettsia rickettsii Iowa.</title>
        <authorList>
            <person name="Ellison D.W."/>
            <person name="Clark T.R."/>
            <person name="Sturdevant D.E."/>
            <person name="Virtaneva K."/>
            <person name="Porcella S.F."/>
            <person name="Hackstadt T."/>
        </authorList>
    </citation>
    <scope>NUCLEOTIDE SEQUENCE [LARGE SCALE GENOMIC DNA]</scope>
    <source>
        <strain>Iowa</strain>
    </source>
</reference>
<keyword id="KW-0687">Ribonucleoprotein</keyword>
<keyword id="KW-0689">Ribosomal protein</keyword>
<keyword id="KW-0694">RNA-binding</keyword>
<keyword id="KW-0699">rRNA-binding</keyword>
<keyword id="KW-0820">tRNA-binding</keyword>
<comment type="function">
    <text evidence="1">Binds 23S rRNA and is also seen to make contacts with the A and possibly P site tRNAs.</text>
</comment>
<comment type="subunit">
    <text evidence="1">Part of the 50S ribosomal subunit.</text>
</comment>
<comment type="similarity">
    <text evidence="1">Belongs to the universal ribosomal protein uL16 family.</text>
</comment>
<gene>
    <name evidence="1" type="primary">rplP</name>
    <name type="ordered locus">RrIowa_1190</name>
</gene>
<dbReference type="EMBL" id="CP000766">
    <property type="protein sequence ID" value="ABY72963.1"/>
    <property type="molecule type" value="Genomic_DNA"/>
</dbReference>
<dbReference type="RefSeq" id="WP_012151148.1">
    <property type="nucleotide sequence ID" value="NC_010263.3"/>
</dbReference>
<dbReference type="SMR" id="B0BUQ3"/>
<dbReference type="GeneID" id="79937663"/>
<dbReference type="KEGG" id="rrj:RrIowa_1190"/>
<dbReference type="eggNOG" id="COG0197">
    <property type="taxonomic scope" value="Bacteria"/>
</dbReference>
<dbReference type="HOGENOM" id="CLU_078858_2_1_5"/>
<dbReference type="Proteomes" id="UP000000796">
    <property type="component" value="Chromosome"/>
</dbReference>
<dbReference type="GO" id="GO:0022625">
    <property type="term" value="C:cytosolic large ribosomal subunit"/>
    <property type="evidence" value="ECO:0007669"/>
    <property type="project" value="TreeGrafter"/>
</dbReference>
<dbReference type="GO" id="GO:0019843">
    <property type="term" value="F:rRNA binding"/>
    <property type="evidence" value="ECO:0007669"/>
    <property type="project" value="UniProtKB-UniRule"/>
</dbReference>
<dbReference type="GO" id="GO:0003735">
    <property type="term" value="F:structural constituent of ribosome"/>
    <property type="evidence" value="ECO:0007669"/>
    <property type="project" value="InterPro"/>
</dbReference>
<dbReference type="GO" id="GO:0000049">
    <property type="term" value="F:tRNA binding"/>
    <property type="evidence" value="ECO:0007669"/>
    <property type="project" value="UniProtKB-KW"/>
</dbReference>
<dbReference type="GO" id="GO:0006412">
    <property type="term" value="P:translation"/>
    <property type="evidence" value="ECO:0007669"/>
    <property type="project" value="UniProtKB-UniRule"/>
</dbReference>
<dbReference type="CDD" id="cd01433">
    <property type="entry name" value="Ribosomal_L16_L10e"/>
    <property type="match status" value="1"/>
</dbReference>
<dbReference type="FunFam" id="3.90.1170.10:FF:000001">
    <property type="entry name" value="50S ribosomal protein L16"/>
    <property type="match status" value="1"/>
</dbReference>
<dbReference type="Gene3D" id="3.90.1170.10">
    <property type="entry name" value="Ribosomal protein L10e/L16"/>
    <property type="match status" value="1"/>
</dbReference>
<dbReference type="HAMAP" id="MF_01342">
    <property type="entry name" value="Ribosomal_uL16"/>
    <property type="match status" value="1"/>
</dbReference>
<dbReference type="InterPro" id="IPR047873">
    <property type="entry name" value="Ribosomal_uL16"/>
</dbReference>
<dbReference type="InterPro" id="IPR000114">
    <property type="entry name" value="Ribosomal_uL16_bact-type"/>
</dbReference>
<dbReference type="InterPro" id="IPR020798">
    <property type="entry name" value="Ribosomal_uL16_CS"/>
</dbReference>
<dbReference type="InterPro" id="IPR016180">
    <property type="entry name" value="Ribosomal_uL16_dom"/>
</dbReference>
<dbReference type="InterPro" id="IPR036920">
    <property type="entry name" value="Ribosomal_uL16_sf"/>
</dbReference>
<dbReference type="NCBIfam" id="TIGR01164">
    <property type="entry name" value="rplP_bact"/>
    <property type="match status" value="1"/>
</dbReference>
<dbReference type="PANTHER" id="PTHR12220">
    <property type="entry name" value="50S/60S RIBOSOMAL PROTEIN L16"/>
    <property type="match status" value="1"/>
</dbReference>
<dbReference type="PANTHER" id="PTHR12220:SF13">
    <property type="entry name" value="LARGE RIBOSOMAL SUBUNIT PROTEIN UL16M"/>
    <property type="match status" value="1"/>
</dbReference>
<dbReference type="Pfam" id="PF00252">
    <property type="entry name" value="Ribosomal_L16"/>
    <property type="match status" value="1"/>
</dbReference>
<dbReference type="PRINTS" id="PR00060">
    <property type="entry name" value="RIBOSOMALL16"/>
</dbReference>
<dbReference type="SUPFAM" id="SSF54686">
    <property type="entry name" value="Ribosomal protein L16p/L10e"/>
    <property type="match status" value="1"/>
</dbReference>
<dbReference type="PROSITE" id="PS00586">
    <property type="entry name" value="RIBOSOMAL_L16_1"/>
    <property type="match status" value="1"/>
</dbReference>
<dbReference type="PROSITE" id="PS00701">
    <property type="entry name" value="RIBOSOMAL_L16_2"/>
    <property type="match status" value="1"/>
</dbReference>
<proteinExistence type="inferred from homology"/>
<protein>
    <recommendedName>
        <fullName evidence="1">Large ribosomal subunit protein uL16</fullName>
    </recommendedName>
    <alternativeName>
        <fullName evidence="2">50S ribosomal protein L16</fullName>
    </alternativeName>
</protein>
<evidence type="ECO:0000255" key="1">
    <source>
        <dbReference type="HAMAP-Rule" id="MF_01342"/>
    </source>
</evidence>
<evidence type="ECO:0000305" key="2"/>
<organism>
    <name type="scientific">Rickettsia rickettsii (strain Iowa)</name>
    <dbReference type="NCBI Taxonomy" id="452659"/>
    <lineage>
        <taxon>Bacteria</taxon>
        <taxon>Pseudomonadati</taxon>
        <taxon>Pseudomonadota</taxon>
        <taxon>Alphaproteobacteria</taxon>
        <taxon>Rickettsiales</taxon>
        <taxon>Rickettsiaceae</taxon>
        <taxon>Rickettsieae</taxon>
        <taxon>Rickettsia</taxon>
        <taxon>spotted fever group</taxon>
    </lineage>
</organism>
<name>RL16_RICRO</name>
<feature type="chain" id="PRO_1000086772" description="Large ribosomal subunit protein uL16">
    <location>
        <begin position="1"/>
        <end position="136"/>
    </location>
</feature>
<sequence length="136" mass="15195">MLAPKKQKFRKAHKGRVASTAKAGTTLAFGSFGLKSIDGWRVTARQIEAGRKAATRCMKRQGRLWIRIFPDVPVSQKPAEVRMGKGKGSPEFFAVRVSPGRIMFEIEGVEENVALRALELASAKLPVRTRIVRRYE</sequence>